<proteinExistence type="evidence at protein level"/>
<dbReference type="EMBL" id="AY736035">
    <property type="protein sequence ID" value="AAU50679.1"/>
    <property type="molecule type" value="mRNA"/>
</dbReference>
<dbReference type="EMBL" id="AF428140">
    <property type="protein sequence ID" value="AAQ04213.1"/>
    <property type="molecule type" value="mRNA"/>
</dbReference>
<dbReference type="EMBL" id="AF318348">
    <property type="protein sequence ID" value="AAL55855.1"/>
    <property type="status" value="ALT_FRAME"/>
    <property type="molecule type" value="mRNA"/>
</dbReference>
<dbReference type="EMBL" id="AC010531">
    <property type="status" value="NOT_ANNOTATED_CDS"/>
    <property type="molecule type" value="Genomic_DNA"/>
</dbReference>
<dbReference type="EMBL" id="BC012748">
    <property type="protein sequence ID" value="AAH12748.1"/>
    <property type="status" value="ALT_INIT"/>
    <property type="molecule type" value="mRNA"/>
</dbReference>
<dbReference type="EMBL" id="AL117444">
    <property type="protein sequence ID" value="CAB55929.2"/>
    <property type="status" value="ALT_INIT"/>
    <property type="molecule type" value="mRNA"/>
</dbReference>
<dbReference type="CCDS" id="CCDS32501.1">
    <molecule id="Q5XUX0-1"/>
</dbReference>
<dbReference type="PIR" id="T17239">
    <property type="entry name" value="T17239"/>
</dbReference>
<dbReference type="RefSeq" id="NP_001269612.1">
    <property type="nucleotide sequence ID" value="NM_001282683.1"/>
</dbReference>
<dbReference type="RefSeq" id="NP_079011.3">
    <molecule id="Q5XUX0-1"/>
    <property type="nucleotide sequence ID" value="NM_024735.4"/>
</dbReference>
<dbReference type="PDB" id="5VZT">
    <property type="method" value="X-ray"/>
    <property type="resolution" value="2.70 A"/>
    <property type="chains" value="B/D=66-539"/>
</dbReference>
<dbReference type="PDB" id="5VZU">
    <property type="method" value="X-ray"/>
    <property type="resolution" value="2.70 A"/>
    <property type="chains" value="B/D=66-539"/>
</dbReference>
<dbReference type="PDBsum" id="5VZT"/>
<dbReference type="PDBsum" id="5VZU"/>
<dbReference type="SMR" id="Q5XUX0"/>
<dbReference type="BioGRID" id="122890">
    <property type="interactions" value="46"/>
</dbReference>
<dbReference type="ComplexPortal" id="CPX-7971">
    <property type="entry name" value="SCF E3 ubiquitin ligase complex, FBXO31 variant"/>
</dbReference>
<dbReference type="CORUM" id="Q5XUX0"/>
<dbReference type="DIP" id="DIP-60449N"/>
<dbReference type="FunCoup" id="Q5XUX0">
    <property type="interactions" value="268"/>
</dbReference>
<dbReference type="IntAct" id="Q5XUX0">
    <property type="interactions" value="23"/>
</dbReference>
<dbReference type="STRING" id="9606.ENSP00000310841"/>
<dbReference type="GlyGen" id="Q5XUX0">
    <property type="glycosylation" value="2 sites, 1 O-linked glycan (1 site)"/>
</dbReference>
<dbReference type="iPTMnet" id="Q5XUX0"/>
<dbReference type="PhosphoSitePlus" id="Q5XUX0"/>
<dbReference type="SwissPalm" id="Q5XUX0"/>
<dbReference type="BioMuta" id="FBXO31"/>
<dbReference type="DMDM" id="146345419"/>
<dbReference type="jPOST" id="Q5XUX0"/>
<dbReference type="MassIVE" id="Q5XUX0"/>
<dbReference type="PaxDb" id="9606-ENSP00000310841"/>
<dbReference type="PeptideAtlas" id="Q5XUX0"/>
<dbReference type="ProteomicsDB" id="65845">
    <molecule id="Q5XUX0-1"/>
</dbReference>
<dbReference type="ProteomicsDB" id="65846">
    <molecule id="Q5XUX0-2"/>
</dbReference>
<dbReference type="Antibodypedia" id="30677">
    <property type="antibodies" value="242 antibodies from 24 providers"/>
</dbReference>
<dbReference type="DNASU" id="79791"/>
<dbReference type="Ensembl" id="ENST00000311635.12">
    <molecule id="Q5XUX0-1"/>
    <property type="protein sequence ID" value="ENSP00000310841.4"/>
    <property type="gene ID" value="ENSG00000103264.18"/>
</dbReference>
<dbReference type="GeneID" id="79791"/>
<dbReference type="KEGG" id="hsa:79791"/>
<dbReference type="MANE-Select" id="ENST00000311635.12">
    <property type="protein sequence ID" value="ENSP00000310841.4"/>
    <property type="RefSeq nucleotide sequence ID" value="NM_024735.5"/>
    <property type="RefSeq protein sequence ID" value="NP_079011.3"/>
</dbReference>
<dbReference type="UCSC" id="uc002fjw.5">
    <molecule id="Q5XUX0-1"/>
    <property type="organism name" value="human"/>
</dbReference>
<dbReference type="AGR" id="HGNC:16510"/>
<dbReference type="CTD" id="79791"/>
<dbReference type="DisGeNET" id="79791"/>
<dbReference type="GeneCards" id="FBXO31"/>
<dbReference type="HGNC" id="HGNC:16510">
    <property type="gene designation" value="FBXO31"/>
</dbReference>
<dbReference type="HPA" id="ENSG00000103264">
    <property type="expression patterns" value="Tissue enhanced (skeletal)"/>
</dbReference>
<dbReference type="MalaCards" id="FBXO31"/>
<dbReference type="MIM" id="609102">
    <property type="type" value="gene"/>
</dbReference>
<dbReference type="MIM" id="615979">
    <property type="type" value="phenotype"/>
</dbReference>
<dbReference type="neXtProt" id="NX_Q5XUX0"/>
<dbReference type="OpenTargets" id="ENSG00000103264"/>
<dbReference type="Orphanet" id="88616">
    <property type="disease" value="Autosomal recessive non-syndromic intellectual disability"/>
</dbReference>
<dbReference type="PharmGKB" id="PA28042"/>
<dbReference type="VEuPathDB" id="HostDB:ENSG00000103264"/>
<dbReference type="eggNOG" id="ENOG502QR2A">
    <property type="taxonomic scope" value="Eukaryota"/>
</dbReference>
<dbReference type="GeneTree" id="ENSGT00390000001368"/>
<dbReference type="HOGENOM" id="CLU_035961_0_0_1"/>
<dbReference type="InParanoid" id="Q5XUX0"/>
<dbReference type="OMA" id="CCKPEKH"/>
<dbReference type="OrthoDB" id="722566at2759"/>
<dbReference type="PAN-GO" id="Q5XUX0">
    <property type="GO annotations" value="2 GO annotations based on evolutionary models"/>
</dbReference>
<dbReference type="PhylomeDB" id="Q5XUX0"/>
<dbReference type="TreeFam" id="TF331818"/>
<dbReference type="PathwayCommons" id="Q5XUX0"/>
<dbReference type="Reactome" id="R-HSA-8951664">
    <property type="pathway name" value="Neddylation"/>
</dbReference>
<dbReference type="Reactome" id="R-HSA-983168">
    <property type="pathway name" value="Antigen processing: Ubiquitination &amp; Proteasome degradation"/>
</dbReference>
<dbReference type="SignaLink" id="Q5XUX0"/>
<dbReference type="SIGNOR" id="Q5XUX0"/>
<dbReference type="UniPathway" id="UPA00143"/>
<dbReference type="BioGRID-ORCS" id="79791">
    <property type="hits" value="13 hits in 1203 CRISPR screens"/>
</dbReference>
<dbReference type="ChiTaRS" id="FBXO31">
    <property type="organism name" value="human"/>
</dbReference>
<dbReference type="GeneWiki" id="FBXO31"/>
<dbReference type="GenomeRNAi" id="79791"/>
<dbReference type="Pharos" id="Q5XUX0">
    <property type="development level" value="Tbio"/>
</dbReference>
<dbReference type="PRO" id="PR:Q5XUX0"/>
<dbReference type="Proteomes" id="UP000005640">
    <property type="component" value="Chromosome 16"/>
</dbReference>
<dbReference type="RNAct" id="Q5XUX0">
    <property type="molecule type" value="protein"/>
</dbReference>
<dbReference type="Bgee" id="ENSG00000103264">
    <property type="expression patterns" value="Expressed in cerebellar hemisphere and 180 other cell types or tissues"/>
</dbReference>
<dbReference type="ExpressionAtlas" id="Q5XUX0">
    <property type="expression patterns" value="baseline and differential"/>
</dbReference>
<dbReference type="GO" id="GO:0005737">
    <property type="term" value="C:cytoplasm"/>
    <property type="evidence" value="ECO:0000314"/>
    <property type="project" value="UniProtKB"/>
</dbReference>
<dbReference type="GO" id="GO:0005829">
    <property type="term" value="C:cytosol"/>
    <property type="evidence" value="ECO:0000304"/>
    <property type="project" value="Reactome"/>
</dbReference>
<dbReference type="GO" id="GO:0043025">
    <property type="term" value="C:neuronal cell body"/>
    <property type="evidence" value="ECO:0000250"/>
    <property type="project" value="UniProtKB"/>
</dbReference>
<dbReference type="GO" id="GO:0019005">
    <property type="term" value="C:SCF ubiquitin ligase complex"/>
    <property type="evidence" value="ECO:0000314"/>
    <property type="project" value="UniProtKB"/>
</dbReference>
<dbReference type="GO" id="GO:0030332">
    <property type="term" value="F:cyclin binding"/>
    <property type="evidence" value="ECO:0000353"/>
    <property type="project" value="UniProtKB"/>
</dbReference>
<dbReference type="GO" id="GO:1990756">
    <property type="term" value="F:ubiquitin-like ligase-substrate adaptor activity"/>
    <property type="evidence" value="ECO:0000314"/>
    <property type="project" value="UniProtKB"/>
</dbReference>
<dbReference type="GO" id="GO:0031145">
    <property type="term" value="P:anaphase-promoting complex-dependent catabolic process"/>
    <property type="evidence" value="ECO:0000315"/>
    <property type="project" value="UniProtKB"/>
</dbReference>
<dbReference type="GO" id="GO:0034599">
    <property type="term" value="P:cellular response to oxidative stress"/>
    <property type="evidence" value="ECO:0000314"/>
    <property type="project" value="UniProtKB"/>
</dbReference>
<dbReference type="GO" id="GO:0006974">
    <property type="term" value="P:DNA damage response"/>
    <property type="evidence" value="ECO:0000314"/>
    <property type="project" value="UniProtKB"/>
</dbReference>
<dbReference type="GO" id="GO:0031571">
    <property type="term" value="P:mitotic G1 DNA damage checkpoint signaling"/>
    <property type="evidence" value="ECO:0000314"/>
    <property type="project" value="UniProtKB"/>
</dbReference>
<dbReference type="GO" id="GO:0043161">
    <property type="term" value="P:proteasome-mediated ubiquitin-dependent protein catabolic process"/>
    <property type="evidence" value="ECO:0000314"/>
    <property type="project" value="UniProtKB"/>
</dbReference>
<dbReference type="GO" id="GO:0016567">
    <property type="term" value="P:protein ubiquitination"/>
    <property type="evidence" value="ECO:0007669"/>
    <property type="project" value="UniProtKB-UniPathway"/>
</dbReference>
<dbReference type="GO" id="GO:0031146">
    <property type="term" value="P:SCF-dependent proteasomal ubiquitin-dependent protein catabolic process"/>
    <property type="evidence" value="ECO:0000314"/>
    <property type="project" value="UniProtKB"/>
</dbReference>
<dbReference type="FunFam" id="1.20.1280.50:FF:000033">
    <property type="entry name" value="F-box only protein 31"/>
    <property type="match status" value="1"/>
</dbReference>
<dbReference type="Gene3D" id="1.20.1280.50">
    <property type="match status" value="1"/>
</dbReference>
<dbReference type="InterPro" id="IPR036047">
    <property type="entry name" value="F-box-like_dom_sf"/>
</dbReference>
<dbReference type="InterPro" id="IPR001810">
    <property type="entry name" value="F-box_dom"/>
</dbReference>
<dbReference type="InterPro" id="IPR045048">
    <property type="entry name" value="FBXO31/39"/>
</dbReference>
<dbReference type="PANTHER" id="PTHR10706">
    <property type="entry name" value="F-BOX FAMILY PROTEIN"/>
    <property type="match status" value="1"/>
</dbReference>
<dbReference type="PANTHER" id="PTHR10706:SF130">
    <property type="entry name" value="F-BOX ONLY PROTEIN 31"/>
    <property type="match status" value="1"/>
</dbReference>
<dbReference type="Pfam" id="PF12014">
    <property type="entry name" value="Cyclin_D1_bind"/>
    <property type="match status" value="1"/>
</dbReference>
<dbReference type="Pfam" id="PF12937">
    <property type="entry name" value="F-box-like"/>
    <property type="match status" value="1"/>
</dbReference>
<dbReference type="SMART" id="SM00256">
    <property type="entry name" value="FBOX"/>
    <property type="match status" value="1"/>
</dbReference>
<dbReference type="SUPFAM" id="SSF81383">
    <property type="entry name" value="F-box domain"/>
    <property type="match status" value="1"/>
</dbReference>
<dbReference type="PROSITE" id="PS50181">
    <property type="entry name" value="FBOX"/>
    <property type="match status" value="1"/>
</dbReference>
<evidence type="ECO:0000250" key="1">
    <source>
        <dbReference type="UniProtKB" id="B2RYN2"/>
    </source>
</evidence>
<evidence type="ECO:0000250" key="2">
    <source>
        <dbReference type="UniProtKB" id="Q3TQF0"/>
    </source>
</evidence>
<evidence type="ECO:0000255" key="3">
    <source>
        <dbReference type="PROSITE-ProRule" id="PRU00080"/>
    </source>
</evidence>
<evidence type="ECO:0000256" key="4">
    <source>
        <dbReference type="SAM" id="MobiDB-lite"/>
    </source>
</evidence>
<evidence type="ECO:0000269" key="5">
    <source>
    </source>
</evidence>
<evidence type="ECO:0000269" key="6">
    <source>
    </source>
</evidence>
<evidence type="ECO:0000269" key="7">
    <source>
    </source>
</evidence>
<evidence type="ECO:0000269" key="8">
    <source>
    </source>
</evidence>
<evidence type="ECO:0000269" key="9">
    <source>
    </source>
</evidence>
<evidence type="ECO:0000269" key="10">
    <source>
    </source>
</evidence>
<evidence type="ECO:0000269" key="11">
    <source>
    </source>
</evidence>
<evidence type="ECO:0000269" key="12">
    <source>
    </source>
</evidence>
<evidence type="ECO:0000269" key="13">
    <source>
    </source>
</evidence>
<evidence type="ECO:0000269" key="14">
    <source>
    </source>
</evidence>
<evidence type="ECO:0000269" key="15">
    <source>
    </source>
</evidence>
<evidence type="ECO:0000269" key="16">
    <source>
    </source>
</evidence>
<evidence type="ECO:0000269" key="17">
    <source>
    </source>
</evidence>
<evidence type="ECO:0000269" key="18">
    <source>
    </source>
</evidence>
<evidence type="ECO:0000269" key="19">
    <source>
    </source>
</evidence>
<evidence type="ECO:0000269" key="20">
    <source>
    </source>
</evidence>
<evidence type="ECO:0000303" key="21">
    <source>
    </source>
</evidence>
<evidence type="ECO:0000303" key="22">
    <source>
    </source>
</evidence>
<evidence type="ECO:0000305" key="23"/>
<evidence type="ECO:0000312" key="24">
    <source>
        <dbReference type="HGNC" id="HGNC:16510"/>
    </source>
</evidence>
<evidence type="ECO:0007744" key="25">
    <source>
        <dbReference type="PDB" id="5VZT"/>
    </source>
</evidence>
<evidence type="ECO:0007744" key="26">
    <source>
        <dbReference type="PDB" id="5VZU"/>
    </source>
</evidence>
<evidence type="ECO:0007829" key="27">
    <source>
        <dbReference type="PDB" id="5VZT"/>
    </source>
</evidence>
<evidence type="ECO:0007829" key="28">
    <source>
        <dbReference type="PDB" id="5VZU"/>
    </source>
</evidence>
<reference key="1">
    <citation type="journal article" date="2004" name="Genes Dev.">
        <title>Systematic analysis and nomenclature of mammalian F-box proteins.</title>
        <authorList>
            <person name="Jin J."/>
            <person name="Cardozo T."/>
            <person name="Lovering R.C."/>
            <person name="Elledge S.J."/>
            <person name="Pagano M."/>
            <person name="Harper J.W."/>
        </authorList>
    </citation>
    <scope>NUCLEOTIDE SEQUENCE [MRNA] (ISOFORM 1)</scope>
</reference>
<reference key="2">
    <citation type="submission" date="2001-10" db="EMBL/GenBank/DDBJ databases">
        <title>A novel F-box protein is differentially expressed in hematopoietic malignancies.</title>
        <authorList>
            <person name="Banham A.H."/>
            <person name="Cordell J.L."/>
            <person name="Jones M."/>
            <person name="Liggins A.P."/>
            <person name="Pulford K."/>
            <person name="Mason D.Y."/>
        </authorList>
    </citation>
    <scope>NUCLEOTIDE SEQUENCE [MRNA] (ISOFORM 1)</scope>
    <source>
        <tissue>Choriocarcinoma</tissue>
    </source>
</reference>
<reference key="3">
    <citation type="journal article" date="2004" name="Proc. Natl. Acad. Sci. U.S.A.">
        <title>Large-scale cDNA transfection screening for genes related to cancer development and progression.</title>
        <authorList>
            <person name="Wan D."/>
            <person name="Gong Y."/>
            <person name="Qin W."/>
            <person name="Zhang P."/>
            <person name="Li J."/>
            <person name="Wei L."/>
            <person name="Zhou X."/>
            <person name="Li H."/>
            <person name="Qiu X."/>
            <person name="Zhong F."/>
            <person name="He L."/>
            <person name="Yu J."/>
            <person name="Yao G."/>
            <person name="Jiang H."/>
            <person name="Qian L."/>
            <person name="Yu Y."/>
            <person name="Shu H."/>
            <person name="Chen X."/>
            <person name="Xu H."/>
            <person name="Guo M."/>
            <person name="Pan Z."/>
            <person name="Chen Y."/>
            <person name="Ge C."/>
            <person name="Yang S."/>
            <person name="Gu J."/>
        </authorList>
    </citation>
    <scope>NUCLEOTIDE SEQUENCE [LARGE SCALE MRNA] (ISOFORM 2)</scope>
</reference>
<reference key="4">
    <citation type="journal article" date="2004" name="Nature">
        <title>The sequence and analysis of duplication-rich human chromosome 16.</title>
        <authorList>
            <person name="Martin J."/>
            <person name="Han C."/>
            <person name="Gordon L.A."/>
            <person name="Terry A."/>
            <person name="Prabhakar S."/>
            <person name="She X."/>
            <person name="Xie G."/>
            <person name="Hellsten U."/>
            <person name="Chan Y.M."/>
            <person name="Altherr M."/>
            <person name="Couronne O."/>
            <person name="Aerts A."/>
            <person name="Bajorek E."/>
            <person name="Black S."/>
            <person name="Blumer H."/>
            <person name="Branscomb E."/>
            <person name="Brown N.C."/>
            <person name="Bruno W.J."/>
            <person name="Buckingham J.M."/>
            <person name="Callen D.F."/>
            <person name="Campbell C.S."/>
            <person name="Campbell M.L."/>
            <person name="Campbell E.W."/>
            <person name="Caoile C."/>
            <person name="Challacombe J.F."/>
            <person name="Chasteen L.A."/>
            <person name="Chertkov O."/>
            <person name="Chi H.C."/>
            <person name="Christensen M."/>
            <person name="Clark L.M."/>
            <person name="Cohn J.D."/>
            <person name="Denys M."/>
            <person name="Detter J.C."/>
            <person name="Dickson M."/>
            <person name="Dimitrijevic-Bussod M."/>
            <person name="Escobar J."/>
            <person name="Fawcett J.J."/>
            <person name="Flowers D."/>
            <person name="Fotopulos D."/>
            <person name="Glavina T."/>
            <person name="Gomez M."/>
            <person name="Gonzales E."/>
            <person name="Goodstein D."/>
            <person name="Goodwin L.A."/>
            <person name="Grady D.L."/>
            <person name="Grigoriev I."/>
            <person name="Groza M."/>
            <person name="Hammon N."/>
            <person name="Hawkins T."/>
            <person name="Haydu L."/>
            <person name="Hildebrand C.E."/>
            <person name="Huang W."/>
            <person name="Israni S."/>
            <person name="Jett J."/>
            <person name="Jewett P.B."/>
            <person name="Kadner K."/>
            <person name="Kimball H."/>
            <person name="Kobayashi A."/>
            <person name="Krawczyk M.-C."/>
            <person name="Leyba T."/>
            <person name="Longmire J.L."/>
            <person name="Lopez F."/>
            <person name="Lou Y."/>
            <person name="Lowry S."/>
            <person name="Ludeman T."/>
            <person name="Manohar C.F."/>
            <person name="Mark G.A."/>
            <person name="McMurray K.L."/>
            <person name="Meincke L.J."/>
            <person name="Morgan J."/>
            <person name="Moyzis R.K."/>
            <person name="Mundt M.O."/>
            <person name="Munk A.C."/>
            <person name="Nandkeshwar R.D."/>
            <person name="Pitluck S."/>
            <person name="Pollard M."/>
            <person name="Predki P."/>
            <person name="Parson-Quintana B."/>
            <person name="Ramirez L."/>
            <person name="Rash S."/>
            <person name="Retterer J."/>
            <person name="Ricke D.O."/>
            <person name="Robinson D.L."/>
            <person name="Rodriguez A."/>
            <person name="Salamov A."/>
            <person name="Saunders E.H."/>
            <person name="Scott D."/>
            <person name="Shough T."/>
            <person name="Stallings R.L."/>
            <person name="Stalvey M."/>
            <person name="Sutherland R.D."/>
            <person name="Tapia R."/>
            <person name="Tesmer J.G."/>
            <person name="Thayer N."/>
            <person name="Thompson L.S."/>
            <person name="Tice H."/>
            <person name="Torney D.C."/>
            <person name="Tran-Gyamfi M."/>
            <person name="Tsai M."/>
            <person name="Ulanovsky L.E."/>
            <person name="Ustaszewska A."/>
            <person name="Vo N."/>
            <person name="White P.S."/>
            <person name="Williams A.L."/>
            <person name="Wills P.L."/>
            <person name="Wu J.-R."/>
            <person name="Wu K."/>
            <person name="Yang J."/>
            <person name="DeJong P."/>
            <person name="Bruce D."/>
            <person name="Doggett N.A."/>
            <person name="Deaven L."/>
            <person name="Schmutz J."/>
            <person name="Grimwood J."/>
            <person name="Richardson P."/>
            <person name="Rokhsar D.S."/>
            <person name="Eichler E.E."/>
            <person name="Gilna P."/>
            <person name="Lucas S.M."/>
            <person name="Myers R.M."/>
            <person name="Rubin E.M."/>
            <person name="Pennacchio L.A."/>
        </authorList>
    </citation>
    <scope>NUCLEOTIDE SEQUENCE [LARGE SCALE GENOMIC DNA]</scope>
</reference>
<reference key="5">
    <citation type="journal article" date="2004" name="Genome Res.">
        <title>The status, quality, and expansion of the NIH full-length cDNA project: the Mammalian Gene Collection (MGC).</title>
        <authorList>
            <consortium name="The MGC Project Team"/>
        </authorList>
    </citation>
    <scope>NUCLEOTIDE SEQUENCE [LARGE SCALE MRNA] (ISOFORM 1)</scope>
    <source>
        <tissue>Placenta</tissue>
    </source>
</reference>
<reference key="6">
    <citation type="journal article" date="2007" name="BMC Genomics">
        <title>The full-ORF clone resource of the German cDNA consortium.</title>
        <authorList>
            <person name="Bechtel S."/>
            <person name="Rosenfelder H."/>
            <person name="Duda A."/>
            <person name="Schmidt C.P."/>
            <person name="Ernst U."/>
            <person name="Wellenreuther R."/>
            <person name="Mehrle A."/>
            <person name="Schuster C."/>
            <person name="Bahr A."/>
            <person name="Bloecker H."/>
            <person name="Heubner D."/>
            <person name="Hoerlein A."/>
            <person name="Michel G."/>
            <person name="Wedler H."/>
            <person name="Koehrer K."/>
            <person name="Ottenwaelder B."/>
            <person name="Poustka A."/>
            <person name="Wiemann S."/>
            <person name="Schupp I."/>
        </authorList>
    </citation>
    <scope>NUCLEOTIDE SEQUENCE [LARGE SCALE MRNA] OF 149-539 (ISOFORM 1)</scope>
    <source>
        <tissue>Testis</tissue>
    </source>
</reference>
<reference key="7">
    <citation type="journal article" date="2005" name="Cancer Res.">
        <title>FBXO31 is the chromosome 16q24.3 senescence gene, a candidate breast tumor suppressor, and a component of an SCF complex.</title>
        <authorList>
            <person name="Kumar R."/>
            <person name="Neilsen P.M."/>
            <person name="Crawford J."/>
            <person name="McKirdy R."/>
            <person name="Lee J."/>
            <person name="Powell J.A."/>
            <person name="Saif Z."/>
            <person name="Martin J.M."/>
            <person name="Lombaerts M."/>
            <person name="Cornelisse C.J."/>
            <person name="Cleton-Jansen A.-M."/>
            <person name="Callen D.F."/>
        </authorList>
    </citation>
    <scope>TISSUE SPECIFICITY</scope>
    <scope>IDENTIFICATION IN A SCF PROTEIN LIGASE COMPLEX</scope>
    <scope>DEVELOPMENTAL STAGE</scope>
</reference>
<reference key="8">
    <citation type="journal article" date="2009" name="Nature">
        <title>F-box protein FBXO31 mediates cyclin D1 degradation to induce G1 arrest after DNA damage.</title>
        <authorList>
            <person name="Santra M.K."/>
            <person name="Wajapeyee N."/>
            <person name="Green M.R."/>
        </authorList>
    </citation>
    <scope>FUNCTION</scope>
    <scope>IDENTIFICATION IN A SCF PROTEIN LIGASE COMPLEX</scope>
    <scope>INDUCTION</scope>
    <scope>PATHWAY</scope>
    <scope>PHOSPHORYLATION AT SER-278</scope>
    <scope>MUTAGENESIS OF SER-278 AND SER-400</scope>
</reference>
<reference key="9">
    <citation type="journal article" date="2013" name="PLoS ONE">
        <title>The centrosomal E3 ubiquitin ligase FBXO31-SCF regulates neuronal morphogenesis and migration.</title>
        <authorList>
            <person name="Vadhvani M."/>
            <person name="Schwedhelm-Domeyer N."/>
            <person name="Mukherjee C."/>
            <person name="Stegmueller J."/>
        </authorList>
    </citation>
    <scope>FUNCTION</scope>
    <scope>PATHWAY</scope>
</reference>
<reference key="10">
    <citation type="journal article" date="2014" name="Hum. Genet.">
        <title>Truncation of the E3 ubiquitin ligase component FBXO31 causes non-syndromic autosomal recessive intellectual disability in a Pakistani family.</title>
        <authorList>
            <person name="Mir A."/>
            <person name="Sritharan K."/>
            <person name="Mittal K."/>
            <person name="Vasli N."/>
            <person name="Araujo C."/>
            <person name="Jamil T."/>
            <person name="Rafiq M.A."/>
            <person name="Anwar Z."/>
            <person name="Mikhailov A."/>
            <person name="Rauf S."/>
            <person name="Mahmood H."/>
            <person name="Shakoor A."/>
            <person name="Ali S."/>
            <person name="So J."/>
            <person name="Naeem F."/>
            <person name="Ayub M."/>
            <person name="Vincent J.B."/>
        </authorList>
    </citation>
    <scope>INVOLVEMENT IN MRT45</scope>
</reference>
<reference key="11">
    <citation type="journal article" date="2014" name="J. Biol. Chem.">
        <title>SCF-FBXO31 E3 ligase targets DNA replication factor Cdt1 for proteolysis in the G2 phase of cell cycle to prevent re-replication.</title>
        <authorList>
            <person name="Johansson P."/>
            <person name="Jeffery J."/>
            <person name="Al-Ejeh F."/>
            <person name="Schulz R.B."/>
            <person name="Callen D.F."/>
            <person name="Kumar R."/>
            <person name="Khanna K.K."/>
        </authorList>
    </citation>
    <scope>FUNCTION</scope>
    <scope>PATHWAY</scope>
    <scope>SUBCELLULAR LOCATION</scope>
</reference>
<reference key="12">
    <citation type="journal article" date="2014" name="J. Biol. Chem.">
        <title>F-box only protein 31 (FBXO31) negatively regulates p38 mitogen-activated protein kinase (MAPK) signaling by mediating lysine 48-linked ubiquitination and degradation of mitogen-activated protein kinase kinase 6 (MKK6).</title>
        <authorList>
            <person name="Liu J."/>
            <person name="Han L."/>
            <person name="Li B."/>
            <person name="Yang J."/>
            <person name="Huen M.S."/>
            <person name="Pan X."/>
            <person name="Tsao S.W."/>
            <person name="Cheung A.L."/>
        </authorList>
    </citation>
    <scope>FUNCTION</scope>
    <scope>PATHWAY</scope>
</reference>
<reference key="13">
    <citation type="journal article" date="2015" name="Proc. Natl. Acad. Sci. U.S.A.">
        <title>F-box protein FBXO31 directs degradation of MDM2 to facilitate p53-mediated growth arrest following genotoxic stress.</title>
        <authorList>
            <person name="Malonia S.K."/>
            <person name="Dutta P."/>
            <person name="Santra M.K."/>
            <person name="Green M.R."/>
        </authorList>
    </citation>
    <scope>FUNCTION</scope>
    <scope>PATHWAY</scope>
</reference>
<reference key="14">
    <citation type="journal article" date="2018" name="J. Biol. Chem.">
        <title>The SCFFBXO46 ubiquitin ligase complex mediates degradation of the tumor suppressor FBXO31 and thereby prevents premature cellular senescence.</title>
        <authorList>
            <person name="Choppara S."/>
            <person name="Ganga S."/>
            <person name="Manne R."/>
            <person name="Dutta P."/>
            <person name="Singh S."/>
            <person name="Santra M.K."/>
        </authorList>
    </citation>
    <scope>FUNCTION</scope>
    <scope>PATHWAY</scope>
    <scope>SUBCELLULAR LOCATION</scope>
    <scope>PHOSPHORYLATION AT THR-419 AND SER-480</scope>
    <scope>MUTAGENESIS OF THR-419; 461-ARG--ARG-464 AND SER-480</scope>
</reference>
<reference key="15">
    <citation type="journal article" date="2018" name="Proc. Natl. Acad. Sci. U.S.A.">
        <title>Degradation of FBXO31 by APC/C is regulated by AKT- and ATM-mediated phosphorylation.</title>
        <authorList>
            <person name="Choppara S."/>
            <person name="Malonia S.K."/>
            <person name="Sankaran G."/>
            <person name="Green M.R."/>
            <person name="Santra M.K."/>
        </authorList>
    </citation>
    <scope>PHOSPHORYLATION AT SER-33</scope>
    <scope>UBIQUITINATION</scope>
    <scope>MUTAGENESIS OF SER-33 AND 64-ARG--LEU-67</scope>
</reference>
<reference key="16">
    <citation type="journal article" date="2019" name="J. Biol. Chem.">
        <title>The tumor suppressor FBXO31 preserves genomic integrity by regulating DNA replication and segregation through precise control of cyclin A levels.</title>
        <authorList>
            <person name="Dutta P."/>
            <person name="Islam S."/>
            <person name="Choppara S."/>
            <person name="Sengupta P."/>
            <person name="Kumar A."/>
            <person name="Kumar A."/>
            <person name="Wani M.R."/>
            <person name="Chatterjee S."/>
            <person name="Santra M.K."/>
        </authorList>
    </citation>
    <scope>FUNCTION</scope>
    <scope>PATHWAY</scope>
    <scope>IDENTIFICATION IN A SCF PROTEIN LIGASE COMPLEX</scope>
    <scope>DOMAIN</scope>
    <scope>MUTAGENESIS OF 297-ASP--LEU-299</scope>
</reference>
<reference key="17">
    <citation type="journal article" date="2021" name="Cell Rep.">
        <title>Loss of FBXO31-mediated degradation of DUSP6 dysregulates ERK and PI3K-AKT signaling and promotes prostate tumorigenesis.</title>
        <authorList>
            <person name="Duan S."/>
            <person name="Moro L."/>
            <person name="Qu R."/>
            <person name="Simoneschi D."/>
            <person name="Cho H."/>
            <person name="Jiang S."/>
            <person name="Zhao H."/>
            <person name="Chang Q."/>
            <person name="de Stanchina E."/>
            <person name="Arbini A.A."/>
            <person name="Pagano M."/>
        </authorList>
    </citation>
    <scope>FUNCTION</scope>
    <scope>PATHWAY</scope>
</reference>
<reference key="18">
    <citation type="journal article" date="2025" name="Nature">
        <title>C-terminal amides mark proteins for degradation via SCF-FBXO31.</title>
        <authorList>
            <person name="Muhar M.F."/>
            <person name="Farnung J."/>
            <person name="Cernakova M."/>
            <person name="Hofmann R."/>
            <person name="Henneberg L.T."/>
            <person name="Pfleiderer M.M."/>
            <person name="Denoth-Lippuner A."/>
            <person name="Kalcic F."/>
            <person name="Nievergelt A.S."/>
            <person name="Peters Al-Bayati M."/>
            <person name="Sidiropoulos N.D."/>
            <person name="Beier V."/>
            <person name="Mann M."/>
            <person name="Jessberger S."/>
            <person name="Jinek M."/>
            <person name="Schulman B.A."/>
            <person name="Bode J.W."/>
            <person name="Corn J.E."/>
        </authorList>
    </citation>
    <scope>FUNCTION</scope>
    <scope>IDENTIFICATION IN A SCF PROTEIN LIGASE COMPLEX</scope>
    <scope>PATHWAY</scope>
    <scope>CHARACTERIZATION OF VARIANT ASN-334</scope>
    <scope>MUTAGENESIS OF TYR-309; ILE-337 AND THR-343</scope>
</reference>
<reference key="19">
    <citation type="journal article" date="2025" name="Nat. Commun.">
        <title>FBXO31-mediated ubiquitination of OGT maintains O-GlcNAcylation homeostasis to restrain endometrial malignancy.</title>
        <authorList>
            <person name="Zhang N."/>
            <person name="Meng Y."/>
            <person name="Mao S."/>
            <person name="Ni H."/>
            <person name="Huang C."/>
            <person name="Shen L."/>
            <person name="Fu K."/>
            <person name="Lv L."/>
            <person name="Yu C."/>
            <person name="Meekrathok P."/>
            <person name="Kuang C."/>
            <person name="Chen F."/>
            <person name="Zhang Y."/>
            <person name="Yuan K."/>
        </authorList>
    </citation>
    <scope>FUNCTION</scope>
    <scope>PATHWAY</scope>
</reference>
<reference evidence="25 26" key="20">
    <citation type="journal article" date="2018" name="Proc. Natl. Acad. Sci. U.S.A.">
        <title>Structural basis of the phosphorylation-independent recognition of cyclin D1 by the SCFFBXO31 ubiquitin ligase.</title>
        <authorList>
            <person name="Li Y."/>
            <person name="Jin K."/>
            <person name="Bunker E."/>
            <person name="Zhang X."/>
            <person name="Luo X."/>
            <person name="Liu X."/>
            <person name="Hao B."/>
        </authorList>
    </citation>
    <scope>X-RAY CRYSTALLOGRAPHY (2.70 ANGSTROMS) OF 66-539 IN COMPLEX WITH ZN(2+) AND CCND1</scope>
    <scope>FUNCTION</scope>
    <scope>PATHWAY</scope>
    <scope>DOMAIN</scope>
    <scope>MUTAGENESIS OF CYS-206; HIS-214; CYS-230; HIS-236; SER-311; HIS-312 AND LYS-330</scope>
</reference>
<reference key="21">
    <citation type="journal article" date="2020" name="Nat. Genet.">
        <title>Mutations disrupting neuritogenesis genes confer risk for cerebral palsy.</title>
        <authorList>
            <person name="Jin S.C."/>
            <person name="Lewis S.A."/>
            <person name="Bakhtiari S."/>
            <person name="Zeng X."/>
            <person name="Sierant M.C."/>
            <person name="Shetty S."/>
            <person name="Nordlie S.M."/>
            <person name="Elie A."/>
            <person name="Corbett M.A."/>
            <person name="Norton B.Y."/>
            <person name="van Eyk C.L."/>
            <person name="Haider S."/>
            <person name="Guida B.S."/>
            <person name="Magee H."/>
            <person name="Liu J."/>
            <person name="Pastore S."/>
            <person name="Vincent J.B."/>
            <person name="Brunstrom-Hernandez J."/>
            <person name="Papavasileiou A."/>
            <person name="Fahey M.C."/>
            <person name="Berry J.G."/>
            <person name="Harper K."/>
            <person name="Zhou C."/>
            <person name="Zhang J."/>
            <person name="Li B."/>
            <person name="Zhao H."/>
            <person name="Heim J."/>
            <person name="Webber D.L."/>
            <person name="Frank M.S.B."/>
            <person name="Xia L."/>
            <person name="Xu Y."/>
            <person name="Zhu D."/>
            <person name="Zhang B."/>
            <person name="Sheth A.H."/>
            <person name="Knight J.R."/>
            <person name="Castaldi C."/>
            <person name="Tikhonova I.R."/>
            <person name="Lopez-Giraldez F."/>
            <person name="Keren B."/>
            <person name="Whalen S."/>
            <person name="Buratti J."/>
            <person name="Doummar D."/>
            <person name="Cho M."/>
            <person name="Retterer K."/>
            <person name="Millan F."/>
            <person name="Wang Y."/>
            <person name="Waugh J.L."/>
            <person name="Rodan L."/>
            <person name="Cohen J.S."/>
            <person name="Fatemi A."/>
            <person name="Lin A.E."/>
            <person name="Phillips J.P."/>
            <person name="Feyma T."/>
            <person name="MacLennan S.C."/>
            <person name="Vaughan S."/>
            <person name="Crompton K.E."/>
            <person name="Reid S.M."/>
            <person name="Reddihough D.S."/>
            <person name="Shang Q."/>
            <person name="Gao C."/>
            <person name="Novak I."/>
            <person name="Badawi N."/>
            <person name="Wilson Y.A."/>
            <person name="McIntyre S.J."/>
            <person name="Mane S.M."/>
            <person name="Wang X."/>
            <person name="Amor D.J."/>
            <person name="Zarnescu D.C."/>
            <person name="Lu Q."/>
            <person name="Xing Q."/>
            <person name="Zhu C."/>
            <person name="Bilguvar K."/>
            <person name="Padilla-Lopez S."/>
            <person name="Lifton R.P."/>
            <person name="Gecz J."/>
            <person name="MacLennan A.H."/>
            <person name="Kruer M.C."/>
        </authorList>
    </citation>
    <scope>VARIANT ASN-334</scope>
</reference>
<reference key="22">
    <citation type="journal article" date="2021" name="Ann. Clin. Transl. Neurol.">
        <title>Variant recurrence confirms the existence of a FBXO31-related spastic-dystonic cerebral palsy syndrome.</title>
        <authorList>
            <person name="Dzinovic I."/>
            <person name="Skorvanek M."/>
            <person name="Pavelekova P."/>
            <person name="Zhao C."/>
            <person name="Keren B."/>
            <person name="Whalen S."/>
            <person name="Bakhtiari S."/>
            <person name="Chih Jin S."/>
            <person name="Kruer M.C."/>
            <person name="Jech R."/>
            <person name="Winkelmann J."/>
            <person name="Zech M."/>
        </authorList>
    </citation>
    <scope>VARIANT ASN-334</scope>
</reference>
<feature type="chain" id="PRO_0000119921" description="F-box only protein 31">
    <location>
        <begin position="1"/>
        <end position="539"/>
    </location>
</feature>
<feature type="domain" description="F-box" evidence="3">
    <location>
        <begin position="64"/>
        <end position="110"/>
    </location>
</feature>
<feature type="region of interest" description="Disordered" evidence="4">
    <location>
        <begin position="11"/>
        <end position="53"/>
    </location>
</feature>
<feature type="region of interest" description="Disordered" evidence="4">
    <location>
        <begin position="377"/>
        <end position="446"/>
    </location>
</feature>
<feature type="short sequence motif" description="D box" evidence="13">
    <location>
        <begin position="64"/>
        <end position="69"/>
    </location>
</feature>
<feature type="short sequence motif" description="DDL motif" evidence="15">
    <location>
        <begin position="297"/>
        <end position="299"/>
    </location>
</feature>
<feature type="compositionally biased region" description="Acidic residues" evidence="4">
    <location>
        <begin position="33"/>
        <end position="43"/>
    </location>
</feature>
<feature type="compositionally biased region" description="Basic and acidic residues" evidence="4">
    <location>
        <begin position="377"/>
        <end position="397"/>
    </location>
</feature>
<feature type="binding site" evidence="12 25 26">
    <location>
        <position position="206"/>
    </location>
    <ligand>
        <name>Zn(2+)</name>
        <dbReference type="ChEBI" id="CHEBI:29105"/>
    </ligand>
</feature>
<feature type="binding site" evidence="12 25 26">
    <location>
        <position position="214"/>
    </location>
    <ligand>
        <name>Zn(2+)</name>
        <dbReference type="ChEBI" id="CHEBI:29105"/>
    </ligand>
</feature>
<feature type="binding site" evidence="12 25 26">
    <location>
        <position position="230"/>
    </location>
    <ligand>
        <name>Zn(2+)</name>
        <dbReference type="ChEBI" id="CHEBI:29105"/>
    </ligand>
</feature>
<feature type="binding site" evidence="12 25 26">
    <location>
        <position position="236"/>
    </location>
    <ligand>
        <name>Zn(2+)</name>
        <dbReference type="ChEBI" id="CHEBI:29105"/>
    </ligand>
</feature>
<feature type="modified residue" description="Phosphoserine" evidence="2">
    <location>
        <position position="33"/>
    </location>
</feature>
<feature type="modified residue" description="Phosphoserine; by PKB/AKT1" evidence="13">
    <location>
        <position position="33"/>
    </location>
</feature>
<feature type="modified residue" description="Phosphothreonine" evidence="2">
    <location>
        <position position="37"/>
    </location>
</feature>
<feature type="modified residue" description="Phosphoserine; by ATM" evidence="6">
    <location>
        <position position="278"/>
    </location>
</feature>
<feature type="modified residue" description="Phosphothreonine; by MTOR" evidence="14">
    <location>
        <position position="419"/>
    </location>
</feature>
<feature type="modified residue" description="Phosphoserine" evidence="14">
    <location>
        <position position="480"/>
    </location>
</feature>
<feature type="splice variant" id="VSP_037469" description="In isoform 2." evidence="21">
    <original>MAVCARLCGVGPSRGCRRRQQRRGPAETAAADSEPDTDPEEERIEASAGVGGGLCAGPSPPPPRCSLLELPPELLVEIFASLPGTDLPSLAQVCTKFRRILHTDTIWRRRCRE</original>
    <variation>MFLVT</variation>
    <location>
        <begin position="1"/>
        <end position="113"/>
    </location>
</feature>
<feature type="sequence variant" id="VAR_090355" description="Found in patients with an autosomal dominant neurodevelopmental disorder characterized by developmental delay, hypotonia, intellectual disability, poor speech and spastic cerebral palsy; likely pathogenic; redirects the substrate specificity toward non-amidated new substrates, leading to their degradation." evidence="16 17 19">
    <original>D</original>
    <variation>N</variation>
    <location>
        <position position="334"/>
    </location>
</feature>
<feature type="mutagenesis site" description="Abolished phosphorylation by AKT1." evidence="13">
    <original>S</original>
    <variation>A</variation>
    <location>
        <position position="33"/>
    </location>
</feature>
<feature type="mutagenesis site" description="Abolished ubiquitination and degradation by the APC/C complex." evidence="13">
    <original>RCSL</original>
    <variation>ACSA</variation>
    <location>
        <begin position="64"/>
        <end position="67"/>
    </location>
</feature>
<feature type="mutagenesis site" description="Impaired folding, inducing the formation of insoluble aggregates." evidence="12">
    <original>C</original>
    <variation>A</variation>
    <variation>S</variation>
    <location>
        <position position="206"/>
    </location>
</feature>
<feature type="mutagenesis site" description="Impaired folding, inducing the formation of insoluble aggregates." evidence="12">
    <original>H</original>
    <variation>A</variation>
    <variation>F</variation>
    <variation>N</variation>
    <location>
        <position position="214"/>
    </location>
</feature>
<feature type="mutagenesis site" description="Impaired folding, inducing the formation of insoluble aggregates." evidence="12">
    <original>C</original>
    <variation>A</variation>
    <location>
        <position position="230"/>
    </location>
</feature>
<feature type="mutagenesis site" description="Impaired folding, inducing the formation of insoluble aggregates." evidence="12">
    <original>H</original>
    <variation>A</variation>
    <location>
        <position position="236"/>
    </location>
</feature>
<feature type="mutagenesis site" description="Fails to accumulate following gamma-irradiation." evidence="6">
    <original>S</original>
    <variation>A</variation>
    <location>
        <position position="278"/>
    </location>
</feature>
<feature type="mutagenesis site" description="Abolished interaction with cyclin-A." evidence="15">
    <original>DDL</original>
    <variation>AAA</variation>
    <location>
        <begin position="297"/>
        <end position="299"/>
    </location>
</feature>
<feature type="mutagenesis site" description="Abolished ability to promote ubiquitination of amidated proteins." evidence="19">
    <original>Y</original>
    <variation>A</variation>
    <location>
        <position position="309"/>
    </location>
</feature>
<feature type="mutagenesis site" description="Does not affect ability to promote ubiquitination of CCND1." evidence="12">
    <original>S</original>
    <variation>A</variation>
    <location>
        <position position="311"/>
    </location>
</feature>
<feature type="mutagenesis site" description="Decreased ability to promote ubiquitination of CCND1." evidence="12">
    <original>H</original>
    <variation>A</variation>
    <location>
        <position position="312"/>
    </location>
</feature>
<feature type="mutagenesis site" description="Decreased ability to promote ubiquitination of CCND1." evidence="12">
    <original>K</original>
    <variation>A</variation>
    <location>
        <position position="330"/>
    </location>
</feature>
<feature type="mutagenesis site" description="Abolished ability to promote ubiquitination of amidated proteins." evidence="19">
    <original>I</original>
    <variation>D</variation>
    <location>
        <position position="337"/>
    </location>
</feature>
<feature type="mutagenesis site" description="Abolished ability to promote ubiquitination of amidated proteins." evidence="19">
    <original>T</original>
    <variation>V</variation>
    <location>
        <position position="343"/>
    </location>
</feature>
<feature type="mutagenesis site" description="No effect following gamma-irradiation." evidence="6">
    <original>S</original>
    <variation>A</variation>
    <location>
        <position position="400"/>
    </location>
</feature>
<feature type="mutagenesis site" description="Decreased phosphorylation, leading to impair ubiquitination by the SCF(FBXO46) complex." evidence="14">
    <original>T</original>
    <variation>A</variation>
    <location>
        <position position="419"/>
    </location>
</feature>
<feature type="mutagenesis site" description="Abolished interaction with FBXO46, preventing ubiquitination and degradation by the SCF(FBXO46) complex." evidence="14">
    <original>RTCR</original>
    <variation>ATCA</variation>
    <location>
        <begin position="461"/>
        <end position="464"/>
    </location>
</feature>
<feature type="mutagenesis site" description="Decreased phosphorylation, leading to impair ubiquitination by the SCF(FBXO46) complex." evidence="14">
    <original>S</original>
    <variation>A</variation>
    <location>
        <position position="480"/>
    </location>
</feature>
<feature type="sequence conflict" description="In Ref. 1; AAU50679." evidence="23" ref="1">
    <original>L</original>
    <variation>V</variation>
    <location>
        <position position="138"/>
    </location>
</feature>
<feature type="sequence conflict" description="In Ref. 1; AAU50679." evidence="23" ref="1">
    <original>D</original>
    <variation>E</variation>
    <location>
        <position position="281"/>
    </location>
</feature>
<feature type="sequence conflict" description="In Ref. 1; AAU50679." evidence="23" ref="1">
    <original>C</original>
    <variation>S</variation>
    <location>
        <position position="466"/>
    </location>
</feature>
<feature type="helix" evidence="27">
    <location>
        <begin position="67"/>
        <end position="69"/>
    </location>
</feature>
<feature type="helix" evidence="27">
    <location>
        <begin position="72"/>
        <end position="80"/>
    </location>
</feature>
<feature type="turn" evidence="27">
    <location>
        <begin position="84"/>
        <end position="86"/>
    </location>
</feature>
<feature type="helix" evidence="27">
    <location>
        <begin position="87"/>
        <end position="91"/>
    </location>
</feature>
<feature type="helix" evidence="27">
    <location>
        <begin position="95"/>
        <end position="100"/>
    </location>
</feature>
<feature type="helix" evidence="27">
    <location>
        <begin position="104"/>
        <end position="115"/>
    </location>
</feature>
<feature type="helix" evidence="27">
    <location>
        <begin position="121"/>
        <end position="126"/>
    </location>
</feature>
<feature type="helix" evidence="27">
    <location>
        <begin position="131"/>
        <end position="137"/>
    </location>
</feature>
<feature type="turn" evidence="27">
    <location>
        <begin position="138"/>
        <end position="142"/>
    </location>
</feature>
<feature type="helix" evidence="27">
    <location>
        <begin position="143"/>
        <end position="145"/>
    </location>
</feature>
<feature type="strand" evidence="27">
    <location>
        <begin position="147"/>
        <end position="151"/>
    </location>
</feature>
<feature type="strand" evidence="27">
    <location>
        <begin position="160"/>
        <end position="165"/>
    </location>
</feature>
<feature type="strand" evidence="27">
    <location>
        <begin position="168"/>
        <end position="175"/>
    </location>
</feature>
<feature type="strand" evidence="27">
    <location>
        <begin position="187"/>
        <end position="195"/>
    </location>
</feature>
<feature type="strand" evidence="27">
    <location>
        <begin position="203"/>
        <end position="206"/>
    </location>
</feature>
<feature type="strand" evidence="27">
    <location>
        <begin position="209"/>
        <end position="211"/>
    </location>
</feature>
<feature type="strand" evidence="27">
    <location>
        <begin position="214"/>
        <end position="220"/>
    </location>
</feature>
<feature type="strand" evidence="27">
    <location>
        <begin position="222"/>
        <end position="231"/>
    </location>
</feature>
<feature type="helix" evidence="27">
    <location>
        <begin position="233"/>
        <end position="235"/>
    </location>
</feature>
<feature type="helix" evidence="27">
    <location>
        <begin position="242"/>
        <end position="253"/>
    </location>
</feature>
<feature type="helix" evidence="28">
    <location>
        <begin position="258"/>
        <end position="261"/>
    </location>
</feature>
<feature type="helix" evidence="27">
    <location>
        <begin position="264"/>
        <end position="278"/>
    </location>
</feature>
<feature type="strand" evidence="27">
    <location>
        <begin position="280"/>
        <end position="282"/>
    </location>
</feature>
<feature type="strand" evidence="27">
    <location>
        <begin position="285"/>
        <end position="289"/>
    </location>
</feature>
<feature type="strand" evidence="27">
    <location>
        <begin position="296"/>
        <end position="298"/>
    </location>
</feature>
<feature type="strand" evidence="27">
    <location>
        <begin position="303"/>
        <end position="308"/>
    </location>
</feature>
<feature type="helix" evidence="27">
    <location>
        <begin position="310"/>
        <end position="312"/>
    </location>
</feature>
<feature type="strand" evidence="27">
    <location>
        <begin position="314"/>
        <end position="321"/>
    </location>
</feature>
<feature type="strand" evidence="27">
    <location>
        <begin position="323"/>
        <end position="332"/>
    </location>
</feature>
<feature type="strand" evidence="27">
    <location>
        <begin position="335"/>
        <end position="337"/>
    </location>
</feature>
<feature type="strand" evidence="27">
    <location>
        <begin position="341"/>
        <end position="352"/>
    </location>
</feature>
<feature type="helix" evidence="27">
    <location>
        <begin position="357"/>
        <end position="360"/>
    </location>
</feature>
<feature type="helix" evidence="27">
    <location>
        <begin position="363"/>
        <end position="380"/>
    </location>
</feature>
<feature type="strand" evidence="27">
    <location>
        <begin position="453"/>
        <end position="455"/>
    </location>
</feature>
<feature type="strand" evidence="27">
    <location>
        <begin position="464"/>
        <end position="475"/>
    </location>
</feature>
<feature type="turn" evidence="27">
    <location>
        <begin position="476"/>
        <end position="478"/>
    </location>
</feature>
<feature type="strand" evidence="27">
    <location>
        <begin position="479"/>
        <end position="492"/>
    </location>
</feature>
<feature type="strand" evidence="27">
    <location>
        <begin position="495"/>
        <end position="500"/>
    </location>
</feature>
<feature type="helix" evidence="27">
    <location>
        <begin position="501"/>
        <end position="503"/>
    </location>
</feature>
<feature type="strand" evidence="27">
    <location>
        <begin position="505"/>
        <end position="511"/>
    </location>
</feature>
<feature type="helix" evidence="27">
    <location>
        <begin position="524"/>
        <end position="536"/>
    </location>
</feature>
<sequence>MAVCARLCGVGPSRGCRRRQQRRGPAETAAADSEPDTDPEEERIEASAGVGGGLCAGPSPPPPRCSLLELPPELLVEIFASLPGTDLPSLAQVCTKFRRILHTDTIWRRRCREEYGVCENLRKLEITGVSCRDVYAKLLHRYRHILGLWQPDIGPYGGLLNVVVDGLFIIGWMYLPPHDPHVDDPMRFKPLFRIHLMERKAATVECMYGHKGPHHGHIQIVKKDEFSTKCNQTDHHRMSGGRQEEFRTWLREEWGRTLEDIFHEHMQELILMKFIYTSQYDNCLTYRRIYLPPSRPDDLIKPGLFKGTYGSHGLEIVMLSFHGRRARGTKITGDPNIPAGQQTVEIDLRHRIQLPDLENQRNFNELSRIVLEVRERVRQEQQEGGHEAGEGRGRQGPRESQPSPAQPRAEAPSKGPDGTPGEDGGEPGDAVAAAEQPAQCGQGQPFVLPVGVSSRNEDYPRTCRMCFYGTGLIAGHGFTSPERTPGVFILFDEDRFGFVWLELKSFSLYSRVQATFRNADAPSPQAFDEMLKNIQSLTS</sequence>
<comment type="function">
    <text evidence="2 6 7 9 10 11 12 14 15 18 19 20">Substrate-recognition component of the SCF(FBXO31) protein ligase complex, which specifically mediates the ubiquitination of proteins amidated at their C-terminus in response to oxidative stress, leading to their degradation by the proteasome (PubMed:39880951). FBXO31 specifically recognizes and binds C-terminal peptides bearing an amide: C-terminal amidation in response to oxidative stress takes place following protein fragmentation (PubMed:39880951). The SCF(FBXO31) also plays a role in G1 arrest following DNA damage by mediating ubiquitination of phosphorylated cyclin-D1 (CCND1), promoting its degradation by the proteasome, resulting in G1 arrest (PubMed:19412162, PubMed:29279382). The SCF(FBXO31) complex is however not a major regulator of CCND1 stability during the G1/S transition (By similarity). In response to genotoxic stress, the SCF(FBXO31) complex directs ubiquitination and degradation of phosphorylated MDM2, thereby promoting p53/TP53-mediated DNA damage response (PubMed:26124108). SCF(FBXO31) complex is required for genomic integrity by catalyzing ubiquitination and degradation of cyclin-A (CCNA1 and/or CCNA2) during the G1 phase (PubMed:31413110). In response to genotoxic stress, the SCF(FBXO31) complex directs ubiquitination and degradation of phosphorylated FBXO46 and MAP2K6 (PubMed:24936062, PubMed:30171069). SCF(FBXO31) complex promotes ubiquitination and degradation of CDT1 during the G2 phase to prevent re-replication (PubMed:24828503). The SCF(FBXO31) complex also mediates ubiquitination and degradation of DUSP6, OGT and PARD6A (PubMed:23469015, PubMed:34686346, PubMed:39894887).</text>
</comment>
<comment type="pathway">
    <text evidence="6 7 9 10 12 15 18 19 20">Protein modification; protein ubiquitination.</text>
</comment>
<comment type="subunit">
    <text evidence="5 6 13 15 19">Part of a SCF (SKP1-cullin-F-box) protein ligase complex SCF(FBXO31) composed of CUL1, SKP1, RBX1 and FBXO31 (PubMed:16357137, PubMed:19412162, PubMed:31413110, PubMed:39880951). Interacts (when phosphorylated at Ser-33) with CDC20, promoting ubiquitination by the APC/C complex (PubMed:29343641).</text>
</comment>
<comment type="interaction">
    <interactant intactId="EBI-6162477">
        <id>Q5XUX0</id>
    </interactant>
    <interactant intactId="EBI-495465">
        <id>Q13315</id>
        <label>ATM</label>
    </interactant>
    <organismsDiffer>false</organismsDiffer>
    <experiments>2</experiments>
</comment>
<comment type="interaction">
    <interactant intactId="EBI-6162477">
        <id>Q5XUX0</id>
    </interactant>
    <interactant intactId="EBI-375001">
        <id>P24385</id>
        <label>CCND1</label>
    </interactant>
    <organismsDiffer>false</organismsDiffer>
    <experiments>4</experiments>
</comment>
<comment type="interaction">
    <interactant intactId="EBI-6162477">
        <id>Q5XUX0</id>
    </interactant>
    <interactant intactId="EBI-307486">
        <id>P63208</id>
        <label>SKP1</label>
    </interactant>
    <organismsDiffer>false</organismsDiffer>
    <experiments>4</experiments>
</comment>
<comment type="subcellular location">
    <subcellularLocation>
        <location evidence="9 14">Cytoplasm</location>
    </subcellularLocation>
    <subcellularLocation>
        <location evidence="1">Cytoplasm</location>
        <location evidence="1">Cytoskeleton</location>
        <location evidence="1">Microtubule organizing center</location>
        <location evidence="1">Centrosome</location>
    </subcellularLocation>
</comment>
<comment type="alternative products">
    <event type="alternative splicing"/>
    <isoform>
        <id>Q5XUX0-1</id>
        <name>1</name>
        <sequence type="displayed"/>
    </isoform>
    <isoform>
        <id>Q5XUX0-2</id>
        <name>2</name>
        <sequence type="described" ref="VSP_037469"/>
    </isoform>
</comment>
<comment type="tissue specificity">
    <text evidence="5">Highly expressed in brain. Expressed at moderate levels in most tissues, except bone marrow.</text>
</comment>
<comment type="developmental stage">
    <text evidence="5">Expression is cell-cycle regulated, and peaks at late G2 to early G1 phase (at protein level).</text>
</comment>
<comment type="induction">
    <text evidence="6">By DNA damage. Increases after UV irradiation, X-ray irradiation, oxidative stress (H(2)O(2)) or addition of the chemotherapeutic DNA-damaging agents etoposide, adriamycin, cisplatin or fluorouracil.</text>
</comment>
<comment type="domain">
    <text evidence="12">Zinc-binding is required for the structure of the protein and facilitate folding.</text>
</comment>
<comment type="domain">
    <text evidence="13">The destruction box (D box) acts as a recognition signal for CDC20 for degradation by the APC/C complex.</text>
</comment>
<comment type="domain">
    <text evidence="15">The DDL motif is required for the interation with cyclin-A (CCNA1 and/or CCNA2).</text>
</comment>
<comment type="PTM">
    <text evidence="6 13 14">Phosphorylation at Ser-278 by ATM following gamma-irradiation results in its stabilization (PubMed:19412162). Phosphorylation at Thr-419 and Ser-480 in absence of stress promotes its ubiquitination and degradation by the SCF(FBXO46) complex (PubMed:30171069). Phosphorylation at Ser-33 by AKT1 promotes association with CDC20 and ubiquitination by the APC/C complex (PubMed:29343641).</text>
</comment>
<comment type="PTM">
    <text evidence="13 14">Ubiquitinated by the SCF(FBXO46) complex in absence of stress, promoting its degradation (PubMed:30171069). Ubiquitinated by the APC/C complex following phosphorylation at Ser-33, leading to its degradation by the proteasome (PubMed:29343641).</text>
</comment>
<comment type="disease" evidence="8 17 19">
    <disease id="DI-04220">
        <name>Intellectual developmental disorder, autosomal recessive 45</name>
        <acronym>MRT45</acronym>
        <description>A disorder characterized by significantly below average general intellectual functioning associated with impairments in adaptive behavior and manifested during the developmental period. MRT45 manifestations include mild to moderate intellectual disability and dysmorphic features, including coarse facies, broad nasal bridge, fleshy nares, and thick, prominent lips.</description>
        <dbReference type="MIM" id="615979"/>
    </disease>
    <text>The disease is caused by variants affecting the gene represented in this entry.</text>
</comment>
<comment type="similarity">
    <text evidence="23">Belongs to the FBXO31 family.</text>
</comment>
<comment type="sequence caution" evidence="23">
    <conflict type="erroneous initiation">
        <sequence resource="EMBL-CDS" id="AAH12748"/>
    </conflict>
</comment>
<comment type="sequence caution" evidence="23">
    <conflict type="frameshift">
        <sequence resource="EMBL-CDS" id="AAL55855"/>
    </conflict>
</comment>
<comment type="sequence caution" evidence="23">
    <conflict type="erroneous initiation">
        <sequence resource="EMBL-CDS" id="CAB55929"/>
    </conflict>
</comment>
<comment type="online information" name="Atlas of Genetics and Cytogenetics in Oncology and Haematology">
    <link uri="https://atlasgeneticsoncology.org/gene/44280/FBXO31"/>
</comment>
<gene>
    <name evidence="22 24" type="primary">FBXO31</name>
    <name type="synonym">FBX14</name>
    <name type="synonym">FBX31</name>
    <name type="ORF">PP2386</name>
</gene>
<keyword id="KW-0002">3D-structure</keyword>
<keyword id="KW-0025">Alternative splicing</keyword>
<keyword id="KW-0131">Cell cycle</keyword>
<keyword id="KW-0963">Cytoplasm</keyword>
<keyword id="KW-0206">Cytoskeleton</keyword>
<keyword id="KW-0225">Disease variant</keyword>
<keyword id="KW-0227">DNA damage</keyword>
<keyword id="KW-0991">Intellectual disability</keyword>
<keyword id="KW-0597">Phosphoprotein</keyword>
<keyword id="KW-1267">Proteomics identification</keyword>
<keyword id="KW-1185">Reference proteome</keyword>
<keyword id="KW-0832">Ubl conjugation</keyword>
<keyword id="KW-0833">Ubl conjugation pathway</keyword>
<accession>Q5XUX0</accession>
<accession>Q5K680</accession>
<accession>Q8WYV1</accession>
<accession>Q96D73</accession>
<accession>Q9UFV4</accession>
<protein>
    <recommendedName>
        <fullName evidence="22">F-box only protein 31</fullName>
    </recommendedName>
</protein>
<organism>
    <name type="scientific">Homo sapiens</name>
    <name type="common">Human</name>
    <dbReference type="NCBI Taxonomy" id="9606"/>
    <lineage>
        <taxon>Eukaryota</taxon>
        <taxon>Metazoa</taxon>
        <taxon>Chordata</taxon>
        <taxon>Craniata</taxon>
        <taxon>Vertebrata</taxon>
        <taxon>Euteleostomi</taxon>
        <taxon>Mammalia</taxon>
        <taxon>Eutheria</taxon>
        <taxon>Euarchontoglires</taxon>
        <taxon>Primates</taxon>
        <taxon>Haplorrhini</taxon>
        <taxon>Catarrhini</taxon>
        <taxon>Hominidae</taxon>
        <taxon>Homo</taxon>
    </lineage>
</organism>
<name>FBX31_HUMAN</name>